<gene>
    <name evidence="1" type="primary">lolB</name>
    <name type="ordered locus">SSON_1969</name>
</gene>
<name>LOLB_SHISS</name>
<protein>
    <recommendedName>
        <fullName evidence="1">Outer-membrane lipoprotein LolB</fullName>
    </recommendedName>
</protein>
<feature type="signal peptide" evidence="1">
    <location>
        <begin position="1"/>
        <end position="21"/>
    </location>
</feature>
<feature type="chain" id="PRO_1000021688" description="Outer-membrane lipoprotein LolB">
    <location>
        <begin position="22"/>
        <end position="207"/>
    </location>
</feature>
<feature type="lipid moiety-binding region" description="N-palmitoyl cysteine" evidence="1">
    <location>
        <position position="22"/>
    </location>
</feature>
<feature type="lipid moiety-binding region" description="S-diacylglycerol cysteine" evidence="1">
    <location>
        <position position="22"/>
    </location>
</feature>
<organism>
    <name type="scientific">Shigella sonnei (strain Ss046)</name>
    <dbReference type="NCBI Taxonomy" id="300269"/>
    <lineage>
        <taxon>Bacteria</taxon>
        <taxon>Pseudomonadati</taxon>
        <taxon>Pseudomonadota</taxon>
        <taxon>Gammaproteobacteria</taxon>
        <taxon>Enterobacterales</taxon>
        <taxon>Enterobacteriaceae</taxon>
        <taxon>Shigella</taxon>
    </lineage>
</organism>
<sequence length="207" mass="23566">MPQPDFRLIRLLPLAALVLTACSVTTPKGPGKSPDSPQWRQHQQDVRNLNQYQTRGAFAYISDQQKVYARFFWQQTGQDRYRLLLTNPLGSTELELNAQPGNVQLVDNKGQRYTADDAEEMIGKLTGMPIPLNSLRQWILGLPGDATDYKLDDQYRLSEITYSQNGKNWKVVYGGYDTKTQPAMPANMELTDGGQRIKLKMDNWIVK</sequence>
<keyword id="KW-0998">Cell outer membrane</keyword>
<keyword id="KW-0143">Chaperone</keyword>
<keyword id="KW-0449">Lipoprotein</keyword>
<keyword id="KW-0472">Membrane</keyword>
<keyword id="KW-0564">Palmitate</keyword>
<keyword id="KW-0653">Protein transport</keyword>
<keyword id="KW-1185">Reference proteome</keyword>
<keyword id="KW-0732">Signal</keyword>
<keyword id="KW-0813">Transport</keyword>
<accession>Q3Z0S7</accession>
<proteinExistence type="inferred from homology"/>
<dbReference type="EMBL" id="CP000038">
    <property type="protein sequence ID" value="AAZ88635.1"/>
    <property type="molecule type" value="Genomic_DNA"/>
</dbReference>
<dbReference type="RefSeq" id="WP_001136068.1">
    <property type="nucleotide sequence ID" value="NC_007384.1"/>
</dbReference>
<dbReference type="SMR" id="Q3Z0S7"/>
<dbReference type="KEGG" id="ssn:SSON_1969"/>
<dbReference type="HOGENOM" id="CLU_092816_1_1_6"/>
<dbReference type="Proteomes" id="UP000002529">
    <property type="component" value="Chromosome"/>
</dbReference>
<dbReference type="GO" id="GO:0009279">
    <property type="term" value="C:cell outer membrane"/>
    <property type="evidence" value="ECO:0007669"/>
    <property type="project" value="UniProtKB-SubCell"/>
</dbReference>
<dbReference type="GO" id="GO:0044874">
    <property type="term" value="P:lipoprotein localization to outer membrane"/>
    <property type="evidence" value="ECO:0007669"/>
    <property type="project" value="UniProtKB-UniRule"/>
</dbReference>
<dbReference type="GO" id="GO:0015031">
    <property type="term" value="P:protein transport"/>
    <property type="evidence" value="ECO:0007669"/>
    <property type="project" value="UniProtKB-KW"/>
</dbReference>
<dbReference type="CDD" id="cd16326">
    <property type="entry name" value="LolB"/>
    <property type="match status" value="1"/>
</dbReference>
<dbReference type="FunFam" id="2.50.20.10:FF:000002">
    <property type="entry name" value="Outer-membrane lipoprotein LolB"/>
    <property type="match status" value="1"/>
</dbReference>
<dbReference type="Gene3D" id="2.50.20.10">
    <property type="entry name" value="Lipoprotein localisation LolA/LolB/LppX"/>
    <property type="match status" value="1"/>
</dbReference>
<dbReference type="HAMAP" id="MF_00233">
    <property type="entry name" value="LolB"/>
    <property type="match status" value="1"/>
</dbReference>
<dbReference type="InterPro" id="IPR029046">
    <property type="entry name" value="LolA/LolB/LppX"/>
</dbReference>
<dbReference type="InterPro" id="IPR004565">
    <property type="entry name" value="OM_lipoprot_LolB"/>
</dbReference>
<dbReference type="NCBIfam" id="TIGR00548">
    <property type="entry name" value="lolB"/>
    <property type="match status" value="1"/>
</dbReference>
<dbReference type="Pfam" id="PF03550">
    <property type="entry name" value="LolB"/>
    <property type="match status" value="1"/>
</dbReference>
<dbReference type="SUPFAM" id="SSF89392">
    <property type="entry name" value="Prokaryotic lipoproteins and lipoprotein localization factors"/>
    <property type="match status" value="1"/>
</dbReference>
<dbReference type="PROSITE" id="PS51257">
    <property type="entry name" value="PROKAR_LIPOPROTEIN"/>
    <property type="match status" value="1"/>
</dbReference>
<reference key="1">
    <citation type="journal article" date="2005" name="Nucleic Acids Res.">
        <title>Genome dynamics and diversity of Shigella species, the etiologic agents of bacillary dysentery.</title>
        <authorList>
            <person name="Yang F."/>
            <person name="Yang J."/>
            <person name="Zhang X."/>
            <person name="Chen L."/>
            <person name="Jiang Y."/>
            <person name="Yan Y."/>
            <person name="Tang X."/>
            <person name="Wang J."/>
            <person name="Xiong Z."/>
            <person name="Dong J."/>
            <person name="Xue Y."/>
            <person name="Zhu Y."/>
            <person name="Xu X."/>
            <person name="Sun L."/>
            <person name="Chen S."/>
            <person name="Nie H."/>
            <person name="Peng J."/>
            <person name="Xu J."/>
            <person name="Wang Y."/>
            <person name="Yuan Z."/>
            <person name="Wen Y."/>
            <person name="Yao Z."/>
            <person name="Shen Y."/>
            <person name="Qiang B."/>
            <person name="Hou Y."/>
            <person name="Yu J."/>
            <person name="Jin Q."/>
        </authorList>
    </citation>
    <scope>NUCLEOTIDE SEQUENCE [LARGE SCALE GENOMIC DNA]</scope>
    <source>
        <strain>Ss046</strain>
    </source>
</reference>
<evidence type="ECO:0000255" key="1">
    <source>
        <dbReference type="HAMAP-Rule" id="MF_00233"/>
    </source>
</evidence>
<comment type="function">
    <text evidence="1">Plays a critical role in the incorporation of lipoproteins in the outer membrane after they are released by the LolA protein.</text>
</comment>
<comment type="subunit">
    <text evidence="1">Monomer.</text>
</comment>
<comment type="subcellular location">
    <subcellularLocation>
        <location evidence="1">Cell outer membrane</location>
        <topology evidence="1">Lipid-anchor</topology>
    </subcellularLocation>
</comment>
<comment type="similarity">
    <text evidence="1">Belongs to the LolB family.</text>
</comment>